<reference evidence="3 5" key="1">
    <citation type="journal article" date="2003" name="Eur. J. Biochem.">
        <title>Sulfation of hydroxychlorobiphenyls. Molecular cloning, expression, and functional characterization of zebrafish SULT1 sulfotransferases.</title>
        <authorList>
            <person name="Sugahara T."/>
            <person name="Liu C.-C."/>
            <person name="Pai T.G."/>
            <person name="Collodi P."/>
            <person name="Suiko M."/>
            <person name="Sakakibara Y."/>
            <person name="Nishiyama K."/>
            <person name="Liu M.-C."/>
        </authorList>
    </citation>
    <scope>NUCLEOTIDE SEQUENCE [MRNA]</scope>
    <scope>FUNCTION</scope>
    <scope>TISSUE SPECIFICITY</scope>
    <scope>ACTIVITY REGULATION</scope>
</reference>
<reference evidence="4" key="2">
    <citation type="submission" date="2003-08" db="EMBL/GenBank/DDBJ databases">
        <authorList>
            <consortium name="NIH - Zebrafish Gene Collection (ZGC) project"/>
        </authorList>
    </citation>
    <scope>NUCLEOTIDE SEQUENCE [LARGE SCALE MRNA]</scope>
    <source>
        <tissue evidence="4">Kidney</tissue>
    </source>
</reference>
<proteinExistence type="evidence at protein level"/>
<gene>
    <name evidence="4" type="primary">sult1st1</name>
</gene>
<sequence>MDIPDFSSISSRPTIFEFEGISMINHFTENWEKVKNFQARPDDILIATYPKAGTTWVSYILDLLYFGENAPEEHTSQPIYMRVPFLESCFKVIASGTELADNMTTSPRLIKTHLPVQLIPKSFWEQNSRVVYVARNAKDNVVSYFHFDRMNIVEPDPGDWNTFLHRFMDGKSVFGPWYDHVNGYWEKKQTYSNLLYLFYEDLVEDTGREVDRLCSFLGLSTSVSDREKITKDVQFDAMKQNKMTNYSTLPVMDFKISPFMRKGKVGDWKNHFTVAQNEQFDEVYKEKMKNATVKFRTEI</sequence>
<keyword id="KW-0128">Catecholamine metabolism</keyword>
<keyword id="KW-0963">Cytoplasm</keyword>
<keyword id="KW-1185">Reference proteome</keyword>
<keyword id="KW-0808">Transferase</keyword>
<evidence type="ECO:0000250" key="1"/>
<evidence type="ECO:0000269" key="2">
    <source>
    </source>
</evidence>
<evidence type="ECO:0000305" key="3"/>
<evidence type="ECO:0000312" key="4">
    <source>
        <dbReference type="EMBL" id="AAH56729.1"/>
    </source>
</evidence>
<evidence type="ECO:0000312" key="5">
    <source>
        <dbReference type="EMBL" id="AAO64983.1"/>
    </source>
</evidence>
<organism>
    <name type="scientific">Danio rerio</name>
    <name type="common">Zebrafish</name>
    <name type="synonym">Brachydanio rerio</name>
    <dbReference type="NCBI Taxonomy" id="7955"/>
    <lineage>
        <taxon>Eukaryota</taxon>
        <taxon>Metazoa</taxon>
        <taxon>Chordata</taxon>
        <taxon>Craniata</taxon>
        <taxon>Vertebrata</taxon>
        <taxon>Euteleostomi</taxon>
        <taxon>Actinopterygii</taxon>
        <taxon>Neopterygii</taxon>
        <taxon>Teleostei</taxon>
        <taxon>Ostariophysi</taxon>
        <taxon>Cypriniformes</taxon>
        <taxon>Danionidae</taxon>
        <taxon>Danioninae</taxon>
        <taxon>Danio</taxon>
    </lineage>
</organism>
<protein>
    <recommendedName>
        <fullName>Cytosolic sulfotransferase 1</fullName>
        <ecNumber>2.8.2.-</ecNumber>
    </recommendedName>
    <alternativeName>
        <fullName>SULT1 ST1</fullName>
    </alternativeName>
</protein>
<comment type="function">
    <text evidence="2">Sulfotransferase that utilizes 3'-phospho-5'-adenylyl sulfate (PAPS) as sulfonate donor to catalyze the sulfate conjugation of a variety of xenobiotic and endogenous compounds, including 2-naphthol, hydroxychlorobiphenyls, dopamine and T3 (triiodo-L-thyronine).</text>
</comment>
<comment type="activity regulation">
    <text evidence="2">Inhibited by Co(2+), Zn(2+), Cd(2+) and Pb(2+) ions. Inactivated by Hg(2+) and Cu(2+) ions.</text>
</comment>
<comment type="biophysicochemical properties">
    <phDependence>
        <text>Optimum pH is 6.0-9.0.</text>
    </phDependence>
    <temperatureDependence>
        <text>Thermostable from 20 to 43 degrees Celsius.</text>
    </temperatureDependence>
</comment>
<comment type="subcellular location">
    <subcellularLocation>
        <location>Cytoplasm</location>
    </subcellularLocation>
</comment>
<comment type="tissue specificity">
    <text evidence="2">Expressed in liver.</text>
</comment>
<comment type="similarity">
    <text evidence="3">Belongs to the sulfotransferase 1 family.</text>
</comment>
<accession>Q6PH37</accession>
<accession>Q7T1C8</accession>
<name>ST1S1_DANRE</name>
<feature type="chain" id="PRO_0000085173" description="Cytosolic sulfotransferase 1">
    <location>
        <begin position="1"/>
        <end position="299"/>
    </location>
</feature>
<feature type="active site" description="Proton acceptor" evidence="1">
    <location>
        <position position="113"/>
    </location>
</feature>
<feature type="binding site" evidence="1">
    <location>
        <begin position="51"/>
        <end position="56"/>
    </location>
    <ligand>
        <name>3'-phosphoadenylyl sulfate</name>
        <dbReference type="ChEBI" id="CHEBI:58339"/>
    </ligand>
</feature>
<feature type="binding site" evidence="1">
    <location>
        <position position="135"/>
    </location>
    <ligand>
        <name>3'-phosphoadenylyl sulfate</name>
        <dbReference type="ChEBI" id="CHEBI:58339"/>
    </ligand>
</feature>
<feature type="binding site" evidence="1">
    <location>
        <position position="143"/>
    </location>
    <ligand>
        <name>3'-phosphoadenylyl sulfate</name>
        <dbReference type="ChEBI" id="CHEBI:58339"/>
    </ligand>
</feature>
<feature type="binding site" evidence="1">
    <location>
        <position position="199"/>
    </location>
    <ligand>
        <name>3'-phosphoadenylyl sulfate</name>
        <dbReference type="ChEBI" id="CHEBI:58339"/>
    </ligand>
</feature>
<feature type="binding site" evidence="1">
    <location>
        <begin position="233"/>
        <end position="238"/>
    </location>
    <ligand>
        <name>3'-phosphoadenylyl sulfate</name>
        <dbReference type="ChEBI" id="CHEBI:58339"/>
    </ligand>
</feature>
<feature type="binding site" evidence="1">
    <location>
        <begin position="261"/>
        <end position="263"/>
    </location>
    <ligand>
        <name>3'-phosphoadenylyl sulfate</name>
        <dbReference type="ChEBI" id="CHEBI:58339"/>
    </ligand>
</feature>
<feature type="sequence conflict" description="In Ref. 1; AAO64983." evidence="3" ref="1">
    <original>I</original>
    <variation>M</variation>
    <location>
        <position position="3"/>
    </location>
</feature>
<feature type="sequence conflict" description="In Ref. 1; AAO64983." evidence="3" ref="1">
    <original>N</original>
    <variation>T</variation>
    <location>
        <position position="193"/>
    </location>
</feature>
<dbReference type="EC" id="2.8.2.-"/>
<dbReference type="EMBL" id="AY181064">
    <property type="protein sequence ID" value="AAO64983.1"/>
    <property type="molecule type" value="mRNA"/>
</dbReference>
<dbReference type="EMBL" id="BC056729">
    <property type="protein sequence ID" value="AAH56729.1"/>
    <property type="molecule type" value="mRNA"/>
</dbReference>
<dbReference type="RefSeq" id="NP_891986.1">
    <property type="nucleotide sequence ID" value="NM_182941.1"/>
</dbReference>
<dbReference type="SMR" id="Q6PH37"/>
<dbReference type="FunCoup" id="Q6PH37">
    <property type="interactions" value="28"/>
</dbReference>
<dbReference type="STRING" id="7955.ENSDARP00000034116"/>
<dbReference type="PaxDb" id="7955-ENSDARP00000034116"/>
<dbReference type="GeneID" id="323424"/>
<dbReference type="KEGG" id="dre:323424"/>
<dbReference type="AGR" id="ZFIN:ZDB-GENE-030131-2144"/>
<dbReference type="CTD" id="323424"/>
<dbReference type="ZFIN" id="ZDB-GENE-030131-2144">
    <property type="gene designation" value="sult1st1"/>
</dbReference>
<dbReference type="eggNOG" id="KOG1584">
    <property type="taxonomic scope" value="Eukaryota"/>
</dbReference>
<dbReference type="InParanoid" id="Q6PH37"/>
<dbReference type="OrthoDB" id="205623at2759"/>
<dbReference type="PhylomeDB" id="Q6PH37"/>
<dbReference type="Reactome" id="R-DRE-156584">
    <property type="pathway name" value="Cytosolic sulfonation of small molecules"/>
</dbReference>
<dbReference type="Reactome" id="R-DRE-9753281">
    <property type="pathway name" value="Paracetamol ADME"/>
</dbReference>
<dbReference type="PRO" id="PR:Q6PH37"/>
<dbReference type="Proteomes" id="UP000000437">
    <property type="component" value="Chromosome 8"/>
</dbReference>
<dbReference type="GO" id="GO:0005737">
    <property type="term" value="C:cytoplasm"/>
    <property type="evidence" value="ECO:0000318"/>
    <property type="project" value="GO_Central"/>
</dbReference>
<dbReference type="GO" id="GO:0004062">
    <property type="term" value="F:aryl sulfotransferase activity"/>
    <property type="evidence" value="ECO:0000318"/>
    <property type="project" value="GO_Central"/>
</dbReference>
<dbReference type="GO" id="GO:0008146">
    <property type="term" value="F:sulfotransferase activity"/>
    <property type="evidence" value="ECO:0000314"/>
    <property type="project" value="UniProtKB"/>
</dbReference>
<dbReference type="GO" id="GO:0006584">
    <property type="term" value="P:catecholamine metabolic process"/>
    <property type="evidence" value="ECO:0007669"/>
    <property type="project" value="UniProtKB-KW"/>
</dbReference>
<dbReference type="GO" id="GO:0051923">
    <property type="term" value="P:sulfation"/>
    <property type="evidence" value="ECO:0000318"/>
    <property type="project" value="GO_Central"/>
</dbReference>
<dbReference type="GO" id="GO:0006805">
    <property type="term" value="P:xenobiotic metabolic process"/>
    <property type="evidence" value="ECO:0000314"/>
    <property type="project" value="UniProtKB"/>
</dbReference>
<dbReference type="FunFam" id="3.40.50.300:FF:000433">
    <property type="entry name" value="Estrogen sulfotransferase"/>
    <property type="match status" value="1"/>
</dbReference>
<dbReference type="Gene3D" id="3.40.50.300">
    <property type="entry name" value="P-loop containing nucleotide triphosphate hydrolases"/>
    <property type="match status" value="1"/>
</dbReference>
<dbReference type="InterPro" id="IPR027417">
    <property type="entry name" value="P-loop_NTPase"/>
</dbReference>
<dbReference type="InterPro" id="IPR000863">
    <property type="entry name" value="Sulfotransferase_dom"/>
</dbReference>
<dbReference type="PANTHER" id="PTHR11783">
    <property type="entry name" value="SULFOTRANSFERASE SULT"/>
    <property type="match status" value="1"/>
</dbReference>
<dbReference type="Pfam" id="PF00685">
    <property type="entry name" value="Sulfotransfer_1"/>
    <property type="match status" value="1"/>
</dbReference>
<dbReference type="SUPFAM" id="SSF52540">
    <property type="entry name" value="P-loop containing nucleoside triphosphate hydrolases"/>
    <property type="match status" value="1"/>
</dbReference>